<accession>Q949Q5</accession>
<accession>Q8L7C3</accession>
<keyword id="KW-0002">3D-structure</keyword>
<keyword id="KW-0150">Chloroplast</keyword>
<keyword id="KW-0903">Direct protein sequencing</keyword>
<keyword id="KW-0472">Membrane</keyword>
<keyword id="KW-0602">Photosynthesis</keyword>
<keyword id="KW-0603">Photosystem I</keyword>
<keyword id="KW-0934">Plastid</keyword>
<keyword id="KW-1185">Reference proteome</keyword>
<keyword id="KW-0793">Thylakoid</keyword>
<keyword id="KW-0809">Transit peptide</keyword>
<keyword id="KW-0812">Transmembrane</keyword>
<keyword id="KW-1133">Transmembrane helix</keyword>
<sequence length="140" mass="15144">MAATFATPSTVIGLGGSSITTKPFSSSFLKPTLSAKNPLRLAGASGGRVTCFERNWLRRDLNVVGFGLIGWLAPSSIPAINGKSLTGLFFDSIGTELAHFPTPPALTSQFWLWLVTWHLGLFLCLTFGQIGFKGRTEDYF</sequence>
<dbReference type="EMBL" id="AJ493060">
    <property type="protein sequence ID" value="CAD37939.1"/>
    <property type="molecule type" value="mRNA"/>
</dbReference>
<dbReference type="EMBL" id="AC006932">
    <property type="status" value="NOT_ANNOTATED_CDS"/>
    <property type="molecule type" value="Genomic_DNA"/>
</dbReference>
<dbReference type="EMBL" id="CP002684">
    <property type="protein sequence ID" value="AEE28283.1"/>
    <property type="molecule type" value="Genomic_DNA"/>
</dbReference>
<dbReference type="EMBL" id="AY050960">
    <property type="protein sequence ID" value="AAK93637.1"/>
    <property type="molecule type" value="mRNA"/>
</dbReference>
<dbReference type="EMBL" id="AY091345">
    <property type="protein sequence ID" value="AAM14284.1"/>
    <property type="molecule type" value="mRNA"/>
</dbReference>
<dbReference type="EMBL" id="AY136345">
    <property type="protein sequence ID" value="AAM97011.1"/>
    <property type="molecule type" value="mRNA"/>
</dbReference>
<dbReference type="EMBL" id="BT000191">
    <property type="protein sequence ID" value="AAN15510.1"/>
    <property type="molecule type" value="mRNA"/>
</dbReference>
<dbReference type="EMBL" id="AY087368">
    <property type="protein sequence ID" value="AAM64918.1"/>
    <property type="molecule type" value="mRNA"/>
</dbReference>
<dbReference type="RefSeq" id="NP_563815.1">
    <property type="nucleotide sequence ID" value="NM_100711.4"/>
</dbReference>
<dbReference type="PDB" id="8J6Z">
    <property type="method" value="EM"/>
    <property type="resolution" value="2.79 A"/>
    <property type="chains" value="O=1-140"/>
</dbReference>
<dbReference type="PDBsum" id="8J6Z"/>
<dbReference type="EMDB" id="EMD-36021"/>
<dbReference type="SMR" id="Q949Q5"/>
<dbReference type="BioGRID" id="22599">
    <property type="interactions" value="1"/>
</dbReference>
<dbReference type="FunCoup" id="Q949Q5">
    <property type="interactions" value="1215"/>
</dbReference>
<dbReference type="STRING" id="3702.Q949Q5"/>
<dbReference type="GlyGen" id="Q949Q5">
    <property type="glycosylation" value="1 site"/>
</dbReference>
<dbReference type="PaxDb" id="3702-AT1G08380.1"/>
<dbReference type="ProteomicsDB" id="226326"/>
<dbReference type="EnsemblPlants" id="AT1G08380.1">
    <property type="protein sequence ID" value="AT1G08380.1"/>
    <property type="gene ID" value="AT1G08380"/>
</dbReference>
<dbReference type="GeneID" id="837358"/>
<dbReference type="Gramene" id="AT1G08380.1">
    <property type="protein sequence ID" value="AT1G08380.1"/>
    <property type="gene ID" value="AT1G08380"/>
</dbReference>
<dbReference type="KEGG" id="ath:AT1G08380"/>
<dbReference type="Araport" id="AT1G08380"/>
<dbReference type="TAIR" id="AT1G08380">
    <property type="gene designation" value="PSAO"/>
</dbReference>
<dbReference type="eggNOG" id="ENOG502S09E">
    <property type="taxonomic scope" value="Eukaryota"/>
</dbReference>
<dbReference type="HOGENOM" id="CLU_151524_0_0_1"/>
<dbReference type="InParanoid" id="Q949Q5"/>
<dbReference type="OMA" id="WHFGLFL"/>
<dbReference type="OrthoDB" id="1903335at2759"/>
<dbReference type="PhylomeDB" id="Q949Q5"/>
<dbReference type="BioCyc" id="MetaCyc:AT1G08380-MONOMER"/>
<dbReference type="PRO" id="PR:Q949Q5"/>
<dbReference type="Proteomes" id="UP000006548">
    <property type="component" value="Chromosome 1"/>
</dbReference>
<dbReference type="ExpressionAtlas" id="Q949Q5">
    <property type="expression patterns" value="baseline and differential"/>
</dbReference>
<dbReference type="GO" id="GO:0009507">
    <property type="term" value="C:chloroplast"/>
    <property type="evidence" value="ECO:0007005"/>
    <property type="project" value="TAIR"/>
</dbReference>
<dbReference type="GO" id="GO:0009535">
    <property type="term" value="C:chloroplast thylakoid membrane"/>
    <property type="evidence" value="ECO:0007669"/>
    <property type="project" value="UniProtKB-SubCell"/>
</dbReference>
<dbReference type="GO" id="GO:0005576">
    <property type="term" value="C:extracellular region"/>
    <property type="evidence" value="ECO:0007005"/>
    <property type="project" value="TAIR"/>
</dbReference>
<dbReference type="GO" id="GO:0009522">
    <property type="term" value="C:photosystem I"/>
    <property type="evidence" value="ECO:0000314"/>
    <property type="project" value="TAIR"/>
</dbReference>
<dbReference type="GO" id="GO:0009579">
    <property type="term" value="C:thylakoid"/>
    <property type="evidence" value="ECO:0000314"/>
    <property type="project" value="TAIR"/>
</dbReference>
<dbReference type="GO" id="GO:0003729">
    <property type="term" value="F:mRNA binding"/>
    <property type="evidence" value="ECO:0000314"/>
    <property type="project" value="TAIR"/>
</dbReference>
<dbReference type="GO" id="GO:0009768">
    <property type="term" value="P:photosynthesis, light harvesting in photosystem I"/>
    <property type="evidence" value="ECO:0000305"/>
    <property type="project" value="TAIR"/>
</dbReference>
<dbReference type="GO" id="GO:0009767">
    <property type="term" value="P:photosynthetic electron transport chain"/>
    <property type="evidence" value="ECO:0000315"/>
    <property type="project" value="UniProtKB"/>
</dbReference>
<dbReference type="InterPro" id="IPR017498">
    <property type="entry name" value="PSI_PsaO"/>
</dbReference>
<dbReference type="NCBIfam" id="TIGR03059">
    <property type="entry name" value="psaOeuk"/>
    <property type="match status" value="1"/>
</dbReference>
<dbReference type="PANTHER" id="PTHR36311">
    <property type="entry name" value="PHOTOSYSTEM I SUBUNIT O"/>
    <property type="match status" value="1"/>
</dbReference>
<dbReference type="PANTHER" id="PTHR36311:SF1">
    <property type="entry name" value="PHOTOSYSTEM I SUBUNIT O"/>
    <property type="match status" value="1"/>
</dbReference>
<dbReference type="Pfam" id="PF22832">
    <property type="entry name" value="PsaO_TMD"/>
    <property type="match status" value="1"/>
</dbReference>
<evidence type="ECO:0000255" key="1"/>
<evidence type="ECO:0000269" key="2">
    <source>
    </source>
</evidence>
<evidence type="ECO:0000269" key="3">
    <source>
    </source>
</evidence>
<evidence type="ECO:0000305" key="4"/>
<evidence type="ECO:0007829" key="5">
    <source>
        <dbReference type="PDB" id="8J6Z"/>
    </source>
</evidence>
<protein>
    <recommendedName>
        <fullName>Photosystem I subunit O</fullName>
        <shortName>PSI-O</shortName>
    </recommendedName>
</protein>
<name>PSAO_ARATH</name>
<organism>
    <name type="scientific">Arabidopsis thaliana</name>
    <name type="common">Mouse-ear cress</name>
    <dbReference type="NCBI Taxonomy" id="3702"/>
    <lineage>
        <taxon>Eukaryota</taxon>
        <taxon>Viridiplantae</taxon>
        <taxon>Streptophyta</taxon>
        <taxon>Embryophyta</taxon>
        <taxon>Tracheophyta</taxon>
        <taxon>Spermatophyta</taxon>
        <taxon>Magnoliopsida</taxon>
        <taxon>eudicotyledons</taxon>
        <taxon>Gunneridae</taxon>
        <taxon>Pentapetalae</taxon>
        <taxon>rosids</taxon>
        <taxon>malvids</taxon>
        <taxon>Brassicales</taxon>
        <taxon>Brassicaceae</taxon>
        <taxon>Camelineae</taxon>
        <taxon>Arabidopsis</taxon>
    </lineage>
</organism>
<reference key="1">
    <citation type="journal article" date="2002" name="FEBS Lett.">
        <title>PSI-O, a new 10-kDa subunit of eukaryotic photosystem I.</title>
        <authorList>
            <person name="Knoetzel J."/>
            <person name="Mant A."/>
            <person name="Haldrup A."/>
            <person name="Jensen P.E."/>
            <person name="Scheller H.V."/>
        </authorList>
    </citation>
    <scope>NUCLEOTIDE SEQUENCE [MRNA]</scope>
    <scope>PROTEIN SEQUENCE OF 52-67</scope>
    <scope>FUNCTION</scope>
    <scope>SUBUNIT</scope>
    <scope>SUBCELLULAR LOCATION</scope>
    <source>
        <strain>cv. Columbia</strain>
    </source>
</reference>
<reference key="2">
    <citation type="journal article" date="2000" name="Nature">
        <title>Sequence and analysis of chromosome 1 of the plant Arabidopsis thaliana.</title>
        <authorList>
            <person name="Theologis A."/>
            <person name="Ecker J.R."/>
            <person name="Palm C.J."/>
            <person name="Federspiel N.A."/>
            <person name="Kaul S."/>
            <person name="White O."/>
            <person name="Alonso J."/>
            <person name="Altafi H."/>
            <person name="Araujo R."/>
            <person name="Bowman C.L."/>
            <person name="Brooks S.Y."/>
            <person name="Buehler E."/>
            <person name="Chan A."/>
            <person name="Chao Q."/>
            <person name="Chen H."/>
            <person name="Cheuk R.F."/>
            <person name="Chin C.W."/>
            <person name="Chung M.K."/>
            <person name="Conn L."/>
            <person name="Conway A.B."/>
            <person name="Conway A.R."/>
            <person name="Creasy T.H."/>
            <person name="Dewar K."/>
            <person name="Dunn P."/>
            <person name="Etgu P."/>
            <person name="Feldblyum T.V."/>
            <person name="Feng J.-D."/>
            <person name="Fong B."/>
            <person name="Fujii C.Y."/>
            <person name="Gill J.E."/>
            <person name="Goldsmith A.D."/>
            <person name="Haas B."/>
            <person name="Hansen N.F."/>
            <person name="Hughes B."/>
            <person name="Huizar L."/>
            <person name="Hunter J.L."/>
            <person name="Jenkins J."/>
            <person name="Johnson-Hopson C."/>
            <person name="Khan S."/>
            <person name="Khaykin E."/>
            <person name="Kim C.J."/>
            <person name="Koo H.L."/>
            <person name="Kremenetskaia I."/>
            <person name="Kurtz D.B."/>
            <person name="Kwan A."/>
            <person name="Lam B."/>
            <person name="Langin-Hooper S."/>
            <person name="Lee A."/>
            <person name="Lee J.M."/>
            <person name="Lenz C.A."/>
            <person name="Li J.H."/>
            <person name="Li Y.-P."/>
            <person name="Lin X."/>
            <person name="Liu S.X."/>
            <person name="Liu Z.A."/>
            <person name="Luros J.S."/>
            <person name="Maiti R."/>
            <person name="Marziali A."/>
            <person name="Militscher J."/>
            <person name="Miranda M."/>
            <person name="Nguyen M."/>
            <person name="Nierman W.C."/>
            <person name="Osborne B.I."/>
            <person name="Pai G."/>
            <person name="Peterson J."/>
            <person name="Pham P.K."/>
            <person name="Rizzo M."/>
            <person name="Rooney T."/>
            <person name="Rowley D."/>
            <person name="Sakano H."/>
            <person name="Salzberg S.L."/>
            <person name="Schwartz J.R."/>
            <person name="Shinn P."/>
            <person name="Southwick A.M."/>
            <person name="Sun H."/>
            <person name="Tallon L.J."/>
            <person name="Tambunga G."/>
            <person name="Toriumi M.J."/>
            <person name="Town C.D."/>
            <person name="Utterback T."/>
            <person name="Van Aken S."/>
            <person name="Vaysberg M."/>
            <person name="Vysotskaia V.S."/>
            <person name="Walker M."/>
            <person name="Wu D."/>
            <person name="Yu G."/>
            <person name="Fraser C.M."/>
            <person name="Venter J.C."/>
            <person name="Davis R.W."/>
        </authorList>
    </citation>
    <scope>NUCLEOTIDE SEQUENCE [LARGE SCALE GENOMIC DNA]</scope>
    <source>
        <strain>cv. Columbia</strain>
    </source>
</reference>
<reference key="3">
    <citation type="journal article" date="2017" name="Plant J.">
        <title>Araport11: a complete reannotation of the Arabidopsis thaliana reference genome.</title>
        <authorList>
            <person name="Cheng C.Y."/>
            <person name="Krishnakumar V."/>
            <person name="Chan A.P."/>
            <person name="Thibaud-Nissen F."/>
            <person name="Schobel S."/>
            <person name="Town C.D."/>
        </authorList>
    </citation>
    <scope>GENOME REANNOTATION</scope>
    <source>
        <strain>cv. Columbia</strain>
    </source>
</reference>
<reference key="4">
    <citation type="journal article" date="2003" name="Science">
        <title>Empirical analysis of transcriptional activity in the Arabidopsis genome.</title>
        <authorList>
            <person name="Yamada K."/>
            <person name="Lim J."/>
            <person name="Dale J.M."/>
            <person name="Chen H."/>
            <person name="Shinn P."/>
            <person name="Palm C.J."/>
            <person name="Southwick A.M."/>
            <person name="Wu H.C."/>
            <person name="Kim C.J."/>
            <person name="Nguyen M."/>
            <person name="Pham P.K."/>
            <person name="Cheuk R.F."/>
            <person name="Karlin-Newmann G."/>
            <person name="Liu S.X."/>
            <person name="Lam B."/>
            <person name="Sakano H."/>
            <person name="Wu T."/>
            <person name="Yu G."/>
            <person name="Miranda M."/>
            <person name="Quach H.L."/>
            <person name="Tripp M."/>
            <person name="Chang C.H."/>
            <person name="Lee J.M."/>
            <person name="Toriumi M.J."/>
            <person name="Chan M.M."/>
            <person name="Tang C.C."/>
            <person name="Onodera C.S."/>
            <person name="Deng J.M."/>
            <person name="Akiyama K."/>
            <person name="Ansari Y."/>
            <person name="Arakawa T."/>
            <person name="Banh J."/>
            <person name="Banno F."/>
            <person name="Bowser L."/>
            <person name="Brooks S.Y."/>
            <person name="Carninci P."/>
            <person name="Chao Q."/>
            <person name="Choy N."/>
            <person name="Enju A."/>
            <person name="Goldsmith A.D."/>
            <person name="Gurjal M."/>
            <person name="Hansen N.F."/>
            <person name="Hayashizaki Y."/>
            <person name="Johnson-Hopson C."/>
            <person name="Hsuan V.W."/>
            <person name="Iida K."/>
            <person name="Karnes M."/>
            <person name="Khan S."/>
            <person name="Koesema E."/>
            <person name="Ishida J."/>
            <person name="Jiang P.X."/>
            <person name="Jones T."/>
            <person name="Kawai J."/>
            <person name="Kamiya A."/>
            <person name="Meyers C."/>
            <person name="Nakajima M."/>
            <person name="Narusaka M."/>
            <person name="Seki M."/>
            <person name="Sakurai T."/>
            <person name="Satou M."/>
            <person name="Tamse R."/>
            <person name="Vaysberg M."/>
            <person name="Wallender E.K."/>
            <person name="Wong C."/>
            <person name="Yamamura Y."/>
            <person name="Yuan S."/>
            <person name="Shinozaki K."/>
            <person name="Davis R.W."/>
            <person name="Theologis A."/>
            <person name="Ecker J.R."/>
        </authorList>
    </citation>
    <scope>NUCLEOTIDE SEQUENCE [LARGE SCALE MRNA]</scope>
    <source>
        <strain>cv. Columbia</strain>
    </source>
</reference>
<reference key="5">
    <citation type="submission" date="2002-03" db="EMBL/GenBank/DDBJ databases">
        <title>Full-length cDNA from Arabidopsis thaliana.</title>
        <authorList>
            <person name="Brover V.V."/>
            <person name="Troukhan M.E."/>
            <person name="Alexandrov N.A."/>
            <person name="Lu Y.-P."/>
            <person name="Flavell R.B."/>
            <person name="Feldmann K.A."/>
        </authorList>
    </citation>
    <scope>NUCLEOTIDE SEQUENCE [LARGE SCALE MRNA]</scope>
</reference>
<reference key="6">
    <citation type="journal article" date="2004" name="J. Biol. Chem.">
        <title>The PSI-O subunit of plant photosystem I is involved in balancing the excitation pressure between the two photosystems.</title>
        <authorList>
            <person name="Jensen P.E."/>
            <person name="Haldrup A."/>
            <person name="Zhang S."/>
            <person name="Scheller H.V."/>
        </authorList>
    </citation>
    <scope>FUNCTION</scope>
    <scope>DISRUPTION PHENOTYPE</scope>
    <scope>INTERACTION WITH PSAL</scope>
    <source>
        <strain>cv. Columbia</strain>
    </source>
</reference>
<comment type="function">
    <text evidence="2 3">Involved in the balancing of excitation energy between the two photosystems I (PSI) and II (PSII).</text>
</comment>
<comment type="subunit">
    <text evidence="2 3">Component of the photosystem I (PSI) complex. Interacts directly with PSAL.</text>
</comment>
<comment type="subcellular location">
    <subcellularLocation>
        <location evidence="2">Plastid</location>
        <location evidence="2">Chloroplast thylakoid membrane</location>
        <topology evidence="2">Multi-pass membrane protein</topology>
    </subcellularLocation>
    <text>Prevalent in stroma lamellae with low amounts in grana.</text>
</comment>
<comment type="disruption phenotype">
    <text evidence="3">Reduction by 50 percent in state transitions due to a disturbed balancing of excitation energy between the two photosystems. Short flowering delay.</text>
</comment>
<comment type="similarity">
    <text evidence="4">Belongs to the PSAO family.</text>
</comment>
<proteinExistence type="evidence at protein level"/>
<gene>
    <name type="primary">PSAO</name>
    <name type="ordered locus">At1g08380</name>
    <name type="ORF">T27G7</name>
</gene>
<feature type="transit peptide" description="Chloroplast" evidence="2">
    <location>
        <begin position="1"/>
        <end position="51"/>
    </location>
</feature>
<feature type="chain" id="PRO_0000430153" description="Photosystem I subunit O">
    <location>
        <begin position="52"/>
        <end position="140"/>
    </location>
</feature>
<feature type="topological domain" description="Stromal">
    <location>
        <begin position="52"/>
        <end position="60"/>
    </location>
</feature>
<feature type="transmembrane region" description="Helical; Name=1" evidence="1">
    <location>
        <begin position="61"/>
        <end position="81"/>
    </location>
</feature>
<feature type="topological domain" description="Lumenal, thylakoid">
    <location>
        <begin position="82"/>
        <end position="109"/>
    </location>
</feature>
<feature type="transmembrane region" description="Helical; Name=2" evidence="1">
    <location>
        <begin position="110"/>
        <end position="130"/>
    </location>
</feature>
<feature type="topological domain" description="Stromal">
    <location>
        <begin position="131"/>
        <end position="140"/>
    </location>
</feature>
<feature type="sequence conflict" description="In Ref. 4; AAM97011/AAN15510." evidence="4" ref="4">
    <original>A</original>
    <variation>V</variation>
    <location>
        <position position="2"/>
    </location>
</feature>
<feature type="helix" evidence="5">
    <location>
        <begin position="62"/>
        <end position="72"/>
    </location>
</feature>
<feature type="helix" evidence="5">
    <location>
        <begin position="74"/>
        <end position="76"/>
    </location>
</feature>
<feature type="helix" evidence="5">
    <location>
        <begin position="85"/>
        <end position="96"/>
    </location>
</feature>
<feature type="turn" evidence="5">
    <location>
        <begin position="97"/>
        <end position="101"/>
    </location>
</feature>
<feature type="helix" evidence="5">
    <location>
        <begin position="110"/>
        <end position="134"/>
    </location>
</feature>
<feature type="turn" evidence="5">
    <location>
        <begin position="135"/>
        <end position="137"/>
    </location>
</feature>